<accession>P9WME4</accession>
<accession>L0T9D7</accession>
<accession>P67671</accession>
<accession>Q50603</accession>
<evidence type="ECO:0000255" key="1">
    <source>
        <dbReference type="PROSITE-ProRule" id="PRU00254"/>
    </source>
</evidence>
<evidence type="ECO:0000256" key="2">
    <source>
        <dbReference type="SAM" id="MobiDB-lite"/>
    </source>
</evidence>
<sequence>MTQLVTRARSARGSTLGEQPRQDQLDFADHTGTAGDGNDGAAAASGPVQPGLFPDDSVPDELVGYRGPSACQIAGITYRQLDYWARTSLVVPSIRSAAGSGSQRLYSFKDILVLKIVKRLLDTGISLHNIRVAVDHLRQRGVQDLANITLFSDGTTVYECTSAEEVVDLLQGGQGVFGIAVSGAMRELTGVIADFHGERADGGESIAAPEDELASRRKHRDRKIG</sequence>
<reference key="1">
    <citation type="journal article" date="2002" name="J. Bacteriol.">
        <title>Whole-genome comparison of Mycobacterium tuberculosis clinical and laboratory strains.</title>
        <authorList>
            <person name="Fleischmann R.D."/>
            <person name="Alland D."/>
            <person name="Eisen J.A."/>
            <person name="Carpenter L."/>
            <person name="White O."/>
            <person name="Peterson J.D."/>
            <person name="DeBoy R.T."/>
            <person name="Dodson R.J."/>
            <person name="Gwinn M.L."/>
            <person name="Haft D.H."/>
            <person name="Hickey E.K."/>
            <person name="Kolonay J.F."/>
            <person name="Nelson W.C."/>
            <person name="Umayam L.A."/>
            <person name="Ermolaeva M.D."/>
            <person name="Salzberg S.L."/>
            <person name="Delcher A."/>
            <person name="Utterback T.R."/>
            <person name="Weidman J.F."/>
            <person name="Khouri H.M."/>
            <person name="Gill J."/>
            <person name="Mikula A."/>
            <person name="Bishai W."/>
            <person name="Jacobs W.R. Jr."/>
            <person name="Venter J.C."/>
            <person name="Fraser C.M."/>
        </authorList>
    </citation>
    <scope>NUCLEOTIDE SEQUENCE [LARGE SCALE GENOMIC DNA]</scope>
    <source>
        <strain>CDC 1551 / Oshkosh</strain>
    </source>
</reference>
<name>Y1830_MYCTO</name>
<protein>
    <recommendedName>
        <fullName>Uncharacterized HTH-type transcriptional regulator MT1879</fullName>
    </recommendedName>
</protein>
<keyword id="KW-0238">DNA-binding</keyword>
<keyword id="KW-1185">Reference proteome</keyword>
<keyword id="KW-0804">Transcription</keyword>
<keyword id="KW-0805">Transcription regulation</keyword>
<dbReference type="EMBL" id="AE000516">
    <property type="protein sequence ID" value="AAK46151.1"/>
    <property type="molecule type" value="Genomic_DNA"/>
</dbReference>
<dbReference type="PIR" id="G70721">
    <property type="entry name" value="G70721"/>
</dbReference>
<dbReference type="SMR" id="P9WME4"/>
<dbReference type="KEGG" id="mtc:MT1879"/>
<dbReference type="PATRIC" id="fig|83331.31.peg.2022"/>
<dbReference type="HOGENOM" id="CLU_092079_0_0_11"/>
<dbReference type="Proteomes" id="UP000001020">
    <property type="component" value="Chromosome"/>
</dbReference>
<dbReference type="GO" id="GO:0003677">
    <property type="term" value="F:DNA binding"/>
    <property type="evidence" value="ECO:0007669"/>
    <property type="project" value="UniProtKB-KW"/>
</dbReference>
<dbReference type="GO" id="GO:0003700">
    <property type="term" value="F:DNA-binding transcription factor activity"/>
    <property type="evidence" value="ECO:0007669"/>
    <property type="project" value="InterPro"/>
</dbReference>
<dbReference type="CDD" id="cd01105">
    <property type="entry name" value="HTH_GlnR-like"/>
    <property type="match status" value="1"/>
</dbReference>
<dbReference type="Gene3D" id="1.10.1660.10">
    <property type="match status" value="1"/>
</dbReference>
<dbReference type="InterPro" id="IPR009061">
    <property type="entry name" value="DNA-bd_dom_put_sf"/>
</dbReference>
<dbReference type="InterPro" id="IPR000551">
    <property type="entry name" value="MerR-type_HTH_dom"/>
</dbReference>
<dbReference type="InterPro" id="IPR047057">
    <property type="entry name" value="MerR_fam"/>
</dbReference>
<dbReference type="PANTHER" id="PTHR30204:SF3">
    <property type="entry name" value="HTH MERR-TYPE DOMAIN-CONTAINING PROTEIN"/>
    <property type="match status" value="1"/>
</dbReference>
<dbReference type="PANTHER" id="PTHR30204">
    <property type="entry name" value="REDOX-CYCLING DRUG-SENSING TRANSCRIPTIONAL ACTIVATOR SOXR"/>
    <property type="match status" value="1"/>
</dbReference>
<dbReference type="Pfam" id="PF13411">
    <property type="entry name" value="MerR_1"/>
    <property type="match status" value="1"/>
</dbReference>
<dbReference type="SMART" id="SM00422">
    <property type="entry name" value="HTH_MERR"/>
    <property type="match status" value="1"/>
</dbReference>
<dbReference type="SUPFAM" id="SSF46955">
    <property type="entry name" value="Putative DNA-binding domain"/>
    <property type="match status" value="1"/>
</dbReference>
<dbReference type="PROSITE" id="PS50937">
    <property type="entry name" value="HTH_MERR_2"/>
    <property type="match status" value="1"/>
</dbReference>
<feature type="chain" id="PRO_0000427318" description="Uncharacterized HTH-type transcriptional regulator MT1879">
    <location>
        <begin position="1"/>
        <end position="225"/>
    </location>
</feature>
<feature type="domain" description="HTH merR-type" evidence="1">
    <location>
        <begin position="64"/>
        <end position="136"/>
    </location>
</feature>
<feature type="region of interest" description="Disordered" evidence="2">
    <location>
        <begin position="1"/>
        <end position="48"/>
    </location>
</feature>
<feature type="region of interest" description="Disordered" evidence="2">
    <location>
        <begin position="201"/>
        <end position="225"/>
    </location>
</feature>
<feature type="compositionally biased region" description="Basic and acidic residues" evidence="2">
    <location>
        <begin position="20"/>
        <end position="29"/>
    </location>
</feature>
<feature type="compositionally biased region" description="Basic residues" evidence="2">
    <location>
        <begin position="216"/>
        <end position="225"/>
    </location>
</feature>
<organism>
    <name type="scientific">Mycobacterium tuberculosis (strain CDC 1551 / Oshkosh)</name>
    <dbReference type="NCBI Taxonomy" id="83331"/>
    <lineage>
        <taxon>Bacteria</taxon>
        <taxon>Bacillati</taxon>
        <taxon>Actinomycetota</taxon>
        <taxon>Actinomycetes</taxon>
        <taxon>Mycobacteriales</taxon>
        <taxon>Mycobacteriaceae</taxon>
        <taxon>Mycobacterium</taxon>
        <taxon>Mycobacterium tuberculosis complex</taxon>
    </lineage>
</organism>
<proteinExistence type="predicted"/>
<gene>
    <name type="ordered locus">MT1879</name>
</gene>